<proteinExistence type="inferred from homology"/>
<keyword id="KW-0001">2Fe-2S</keyword>
<keyword id="KW-0004">4Fe-4S</keyword>
<keyword id="KW-0093">Biotin biosynthesis</keyword>
<keyword id="KW-0408">Iron</keyword>
<keyword id="KW-0411">Iron-sulfur</keyword>
<keyword id="KW-0479">Metal-binding</keyword>
<keyword id="KW-1185">Reference proteome</keyword>
<keyword id="KW-0949">S-adenosyl-L-methionine</keyword>
<keyword id="KW-0808">Transferase</keyword>
<accession>Q0C661</accession>
<feature type="chain" id="PRO_0000381431" description="Biotin synthase">
    <location>
        <begin position="1"/>
        <end position="320"/>
    </location>
</feature>
<feature type="domain" description="Radical SAM core" evidence="2">
    <location>
        <begin position="43"/>
        <end position="270"/>
    </location>
</feature>
<feature type="binding site" evidence="1">
    <location>
        <position position="58"/>
    </location>
    <ligand>
        <name>[4Fe-4S] cluster</name>
        <dbReference type="ChEBI" id="CHEBI:49883"/>
        <note>4Fe-4S-S-AdoMet</note>
    </ligand>
</feature>
<feature type="binding site" evidence="1">
    <location>
        <position position="62"/>
    </location>
    <ligand>
        <name>[4Fe-4S] cluster</name>
        <dbReference type="ChEBI" id="CHEBI:49883"/>
        <note>4Fe-4S-S-AdoMet</note>
    </ligand>
</feature>
<feature type="binding site" evidence="1">
    <location>
        <position position="65"/>
    </location>
    <ligand>
        <name>[4Fe-4S] cluster</name>
        <dbReference type="ChEBI" id="CHEBI:49883"/>
        <note>4Fe-4S-S-AdoMet</note>
    </ligand>
</feature>
<feature type="binding site" evidence="1">
    <location>
        <position position="102"/>
    </location>
    <ligand>
        <name>[2Fe-2S] cluster</name>
        <dbReference type="ChEBI" id="CHEBI:190135"/>
    </ligand>
</feature>
<feature type="binding site" evidence="1">
    <location>
        <position position="133"/>
    </location>
    <ligand>
        <name>[2Fe-2S] cluster</name>
        <dbReference type="ChEBI" id="CHEBI:190135"/>
    </ligand>
</feature>
<feature type="binding site" evidence="1">
    <location>
        <position position="193"/>
    </location>
    <ligand>
        <name>[2Fe-2S] cluster</name>
        <dbReference type="ChEBI" id="CHEBI:190135"/>
    </ligand>
</feature>
<feature type="binding site" evidence="1">
    <location>
        <position position="265"/>
    </location>
    <ligand>
        <name>[2Fe-2S] cluster</name>
        <dbReference type="ChEBI" id="CHEBI:190135"/>
    </ligand>
</feature>
<organism>
    <name type="scientific">Hyphomonas neptunium (strain ATCC 15444)</name>
    <dbReference type="NCBI Taxonomy" id="228405"/>
    <lineage>
        <taxon>Bacteria</taxon>
        <taxon>Pseudomonadati</taxon>
        <taxon>Pseudomonadota</taxon>
        <taxon>Alphaproteobacteria</taxon>
        <taxon>Hyphomonadales</taxon>
        <taxon>Hyphomonadaceae</taxon>
        <taxon>Hyphomonas</taxon>
    </lineage>
</organism>
<protein>
    <recommendedName>
        <fullName evidence="1">Biotin synthase</fullName>
        <ecNumber evidence="1">2.8.1.6</ecNumber>
    </recommendedName>
</protein>
<comment type="function">
    <text evidence="1">Catalyzes the conversion of dethiobiotin (DTB) to biotin by the insertion of a sulfur atom into dethiobiotin via a radical-based mechanism.</text>
</comment>
<comment type="catalytic activity">
    <reaction evidence="1">
        <text>(4R,5S)-dethiobiotin + (sulfur carrier)-SH + 2 reduced [2Fe-2S]-[ferredoxin] + 2 S-adenosyl-L-methionine = (sulfur carrier)-H + biotin + 2 5'-deoxyadenosine + 2 L-methionine + 2 oxidized [2Fe-2S]-[ferredoxin]</text>
        <dbReference type="Rhea" id="RHEA:22060"/>
        <dbReference type="Rhea" id="RHEA-COMP:10000"/>
        <dbReference type="Rhea" id="RHEA-COMP:10001"/>
        <dbReference type="Rhea" id="RHEA-COMP:14737"/>
        <dbReference type="Rhea" id="RHEA-COMP:14739"/>
        <dbReference type="ChEBI" id="CHEBI:17319"/>
        <dbReference type="ChEBI" id="CHEBI:29917"/>
        <dbReference type="ChEBI" id="CHEBI:33737"/>
        <dbReference type="ChEBI" id="CHEBI:33738"/>
        <dbReference type="ChEBI" id="CHEBI:57586"/>
        <dbReference type="ChEBI" id="CHEBI:57844"/>
        <dbReference type="ChEBI" id="CHEBI:59789"/>
        <dbReference type="ChEBI" id="CHEBI:64428"/>
        <dbReference type="ChEBI" id="CHEBI:149473"/>
        <dbReference type="EC" id="2.8.1.6"/>
    </reaction>
</comment>
<comment type="cofactor">
    <cofactor evidence="1">
        <name>[4Fe-4S] cluster</name>
        <dbReference type="ChEBI" id="CHEBI:49883"/>
    </cofactor>
    <text evidence="1">Binds 1 [4Fe-4S] cluster. The cluster is coordinated with 3 cysteines and an exchangeable S-adenosyl-L-methionine.</text>
</comment>
<comment type="cofactor">
    <cofactor evidence="1">
        <name>[2Fe-2S] cluster</name>
        <dbReference type="ChEBI" id="CHEBI:190135"/>
    </cofactor>
    <text evidence="1">Binds 1 [2Fe-2S] cluster. The cluster is coordinated with 3 cysteines and 1 arginine.</text>
</comment>
<comment type="pathway">
    <text evidence="1">Cofactor biosynthesis; biotin biosynthesis; biotin from 7,8-diaminononanoate: step 2/2.</text>
</comment>
<comment type="subunit">
    <text evidence="1">Homodimer.</text>
</comment>
<comment type="similarity">
    <text evidence="1">Belongs to the radical SAM superfamily. Biotin synthase family.</text>
</comment>
<reference key="1">
    <citation type="journal article" date="2006" name="J. Bacteriol.">
        <title>Comparative genomic evidence for a close relationship between the dimorphic prosthecate bacteria Hyphomonas neptunium and Caulobacter crescentus.</title>
        <authorList>
            <person name="Badger J.H."/>
            <person name="Hoover T.R."/>
            <person name="Brun Y.V."/>
            <person name="Weiner R.M."/>
            <person name="Laub M.T."/>
            <person name="Alexandre G."/>
            <person name="Mrazek J."/>
            <person name="Ren Q."/>
            <person name="Paulsen I.T."/>
            <person name="Nelson K.E."/>
            <person name="Khouri H.M."/>
            <person name="Radune D."/>
            <person name="Sosa J."/>
            <person name="Dodson R.J."/>
            <person name="Sullivan S.A."/>
            <person name="Rosovitz M.J."/>
            <person name="Madupu R."/>
            <person name="Brinkac L.M."/>
            <person name="Durkin A.S."/>
            <person name="Daugherty S.C."/>
            <person name="Kothari S.P."/>
            <person name="Giglio M.G."/>
            <person name="Zhou L."/>
            <person name="Haft D.H."/>
            <person name="Selengut J.D."/>
            <person name="Davidsen T.M."/>
            <person name="Yang Q."/>
            <person name="Zafar N."/>
            <person name="Ward N.L."/>
        </authorList>
    </citation>
    <scope>NUCLEOTIDE SEQUENCE [LARGE SCALE GENOMIC DNA]</scope>
    <source>
        <strain>ATCC 15444</strain>
    </source>
</reference>
<sequence length="320" mass="34481">MTSSDLTPRQNWTREEIAAIYDLPLDQLFARALAVKAAHWADGAVQKSQLLSIKTGGCAENCGYCSQSASFKTGLKAEKLLPVEEVVDAARRAKANGADRFCMGAAWRSLKDRDLPKVAEMISAVKAEGLETCVTLGMLEEGQAEALKEAGLDYYNHNLDTSREYYSTVVTTRTFDDRIETLGRARQAGIKLCCGGILGMGESRSDRVGLIHELSLLSPHPESVPVNKLVPIEGTPLANSEELDTLELARAIAVCRIVFPKSWVRLSAGRETMSAEGQALCILAGANSIFVGDRLLTTANPAMDKDARLLESVGGGCSKC</sequence>
<name>BIOB_HYPNA</name>
<dbReference type="EC" id="2.8.1.6" evidence="1"/>
<dbReference type="EMBL" id="CP000158">
    <property type="protein sequence ID" value="ABI78784.1"/>
    <property type="molecule type" value="Genomic_DNA"/>
</dbReference>
<dbReference type="RefSeq" id="WP_011645082.1">
    <property type="nucleotide sequence ID" value="NC_008358.1"/>
</dbReference>
<dbReference type="SMR" id="Q0C661"/>
<dbReference type="STRING" id="228405.HNE_0048"/>
<dbReference type="KEGG" id="hne:HNE_0048"/>
<dbReference type="eggNOG" id="COG0502">
    <property type="taxonomic scope" value="Bacteria"/>
</dbReference>
<dbReference type="HOGENOM" id="CLU_033172_1_2_5"/>
<dbReference type="UniPathway" id="UPA00078">
    <property type="reaction ID" value="UER00162"/>
</dbReference>
<dbReference type="Proteomes" id="UP000001959">
    <property type="component" value="Chromosome"/>
</dbReference>
<dbReference type="GO" id="GO:0051537">
    <property type="term" value="F:2 iron, 2 sulfur cluster binding"/>
    <property type="evidence" value="ECO:0007669"/>
    <property type="project" value="UniProtKB-KW"/>
</dbReference>
<dbReference type="GO" id="GO:0051539">
    <property type="term" value="F:4 iron, 4 sulfur cluster binding"/>
    <property type="evidence" value="ECO:0007669"/>
    <property type="project" value="UniProtKB-KW"/>
</dbReference>
<dbReference type="GO" id="GO:0004076">
    <property type="term" value="F:biotin synthase activity"/>
    <property type="evidence" value="ECO:0007669"/>
    <property type="project" value="UniProtKB-UniRule"/>
</dbReference>
<dbReference type="GO" id="GO:0005506">
    <property type="term" value="F:iron ion binding"/>
    <property type="evidence" value="ECO:0007669"/>
    <property type="project" value="UniProtKB-UniRule"/>
</dbReference>
<dbReference type="GO" id="GO:0009102">
    <property type="term" value="P:biotin biosynthetic process"/>
    <property type="evidence" value="ECO:0007669"/>
    <property type="project" value="UniProtKB-UniRule"/>
</dbReference>
<dbReference type="CDD" id="cd01335">
    <property type="entry name" value="Radical_SAM"/>
    <property type="match status" value="1"/>
</dbReference>
<dbReference type="Gene3D" id="3.20.20.70">
    <property type="entry name" value="Aldolase class I"/>
    <property type="match status" value="1"/>
</dbReference>
<dbReference type="HAMAP" id="MF_01694">
    <property type="entry name" value="BioB"/>
    <property type="match status" value="1"/>
</dbReference>
<dbReference type="InterPro" id="IPR013785">
    <property type="entry name" value="Aldolase_TIM"/>
</dbReference>
<dbReference type="InterPro" id="IPR010722">
    <property type="entry name" value="BATS_dom"/>
</dbReference>
<dbReference type="InterPro" id="IPR002684">
    <property type="entry name" value="Biotin_synth/BioAB"/>
</dbReference>
<dbReference type="InterPro" id="IPR024177">
    <property type="entry name" value="Biotin_synthase"/>
</dbReference>
<dbReference type="InterPro" id="IPR006638">
    <property type="entry name" value="Elp3/MiaA/NifB-like_rSAM"/>
</dbReference>
<dbReference type="InterPro" id="IPR007197">
    <property type="entry name" value="rSAM"/>
</dbReference>
<dbReference type="NCBIfam" id="TIGR00433">
    <property type="entry name" value="bioB"/>
    <property type="match status" value="1"/>
</dbReference>
<dbReference type="PANTHER" id="PTHR22976">
    <property type="entry name" value="BIOTIN SYNTHASE"/>
    <property type="match status" value="1"/>
</dbReference>
<dbReference type="PANTHER" id="PTHR22976:SF2">
    <property type="entry name" value="BIOTIN SYNTHASE, MITOCHONDRIAL"/>
    <property type="match status" value="1"/>
</dbReference>
<dbReference type="Pfam" id="PF06968">
    <property type="entry name" value="BATS"/>
    <property type="match status" value="1"/>
</dbReference>
<dbReference type="Pfam" id="PF04055">
    <property type="entry name" value="Radical_SAM"/>
    <property type="match status" value="1"/>
</dbReference>
<dbReference type="PIRSF" id="PIRSF001619">
    <property type="entry name" value="Biotin_synth"/>
    <property type="match status" value="1"/>
</dbReference>
<dbReference type="SFLD" id="SFLDF00272">
    <property type="entry name" value="biotin_synthase"/>
    <property type="match status" value="1"/>
</dbReference>
<dbReference type="SFLD" id="SFLDS00029">
    <property type="entry name" value="Radical_SAM"/>
    <property type="match status" value="1"/>
</dbReference>
<dbReference type="SMART" id="SM00876">
    <property type="entry name" value="BATS"/>
    <property type="match status" value="1"/>
</dbReference>
<dbReference type="SMART" id="SM00729">
    <property type="entry name" value="Elp3"/>
    <property type="match status" value="1"/>
</dbReference>
<dbReference type="SUPFAM" id="SSF102114">
    <property type="entry name" value="Radical SAM enzymes"/>
    <property type="match status" value="1"/>
</dbReference>
<dbReference type="PROSITE" id="PS51918">
    <property type="entry name" value="RADICAL_SAM"/>
    <property type="match status" value="1"/>
</dbReference>
<gene>
    <name evidence="1" type="primary">bioB</name>
    <name type="ordered locus">HNE_0048</name>
</gene>
<evidence type="ECO:0000255" key="1">
    <source>
        <dbReference type="HAMAP-Rule" id="MF_01694"/>
    </source>
</evidence>
<evidence type="ECO:0000255" key="2">
    <source>
        <dbReference type="PROSITE-ProRule" id="PRU01266"/>
    </source>
</evidence>